<sequence length="106" mass="11359">MNRIYACPVADVPEGEALRIDTSPVIALFNVGGEFYAINDRCSHGNASMSEGYLEDDATVECPLHAASFCLKTGKALCLPATDPLTTYPVHVEGSDIFIDLPEAQP</sequence>
<reference key="1">
    <citation type="journal article" date="2005" name="Nucleic Acids Res.">
        <title>Genome dynamics and diversity of Shigella species, the etiologic agents of bacillary dysentery.</title>
        <authorList>
            <person name="Yang F."/>
            <person name="Yang J."/>
            <person name="Zhang X."/>
            <person name="Chen L."/>
            <person name="Jiang Y."/>
            <person name="Yan Y."/>
            <person name="Tang X."/>
            <person name="Wang J."/>
            <person name="Xiong Z."/>
            <person name="Dong J."/>
            <person name="Xue Y."/>
            <person name="Zhu Y."/>
            <person name="Xu X."/>
            <person name="Sun L."/>
            <person name="Chen S."/>
            <person name="Nie H."/>
            <person name="Peng J."/>
            <person name="Xu J."/>
            <person name="Wang Y."/>
            <person name="Yuan Z."/>
            <person name="Wen Y."/>
            <person name="Yao Z."/>
            <person name="Shen Y."/>
            <person name="Qiang B."/>
            <person name="Hou Y."/>
            <person name="Yu J."/>
            <person name="Jin Q."/>
        </authorList>
    </citation>
    <scope>NUCLEOTIDE SEQUENCE [LARGE SCALE GENOMIC DNA]</scope>
    <source>
        <strain>Sb227</strain>
    </source>
</reference>
<keyword id="KW-0001">2Fe-2S</keyword>
<keyword id="KW-0058">Aromatic hydrocarbons catabolism</keyword>
<keyword id="KW-0249">Electron transport</keyword>
<keyword id="KW-0408">Iron</keyword>
<keyword id="KW-0411">Iron-sulfur</keyword>
<keyword id="KW-0479">Metal-binding</keyword>
<keyword id="KW-0813">Transport</keyword>
<comment type="function">
    <text evidence="1">Part of the multicomponent 3-phenylpropionate dioxygenase, that converts 3-phenylpropionic acid (PP) and cinnamic acid (CI) into 3-phenylpropionate-dihydrodiol (PP-dihydrodiol) and cinnamic acid-dihydrodiol (CI-dihydrodiol), respectively. This protein seems to be a 2Fe-2S ferredoxin.</text>
</comment>
<comment type="cofactor">
    <cofactor evidence="1">
        <name>[2Fe-2S] cluster</name>
        <dbReference type="ChEBI" id="CHEBI:190135"/>
    </cofactor>
    <text evidence="1">Binds 1 [2Fe-2S] cluster per subunit.</text>
</comment>
<comment type="pathway">
    <text evidence="1">Aromatic compound metabolism; 3-phenylpropanoate degradation.</text>
</comment>
<comment type="subunit">
    <text evidence="1">This dioxygenase system consists of four proteins: the two subunits of the hydroxylase component (HcaE and HcaF), a ferredoxin (HcaC) and a ferredoxin reductase (HcaD).</text>
</comment>
<comment type="similarity">
    <text evidence="1">Belongs to the bacterial ring-hydroxylating dioxygenase ferredoxin component family.</text>
</comment>
<dbReference type="EMBL" id="CP000036">
    <property type="protein sequence ID" value="ABB67108.1"/>
    <property type="molecule type" value="Genomic_DNA"/>
</dbReference>
<dbReference type="RefSeq" id="WP_001080104.1">
    <property type="nucleotide sequence ID" value="NC_007613.1"/>
</dbReference>
<dbReference type="SMR" id="Q31XV0"/>
<dbReference type="KEGG" id="sbo:SBO_2564"/>
<dbReference type="HOGENOM" id="CLU_055690_5_2_6"/>
<dbReference type="UniPathway" id="UPA00714"/>
<dbReference type="Proteomes" id="UP000007067">
    <property type="component" value="Chromosome"/>
</dbReference>
<dbReference type="GO" id="GO:0051537">
    <property type="term" value="F:2 iron, 2 sulfur cluster binding"/>
    <property type="evidence" value="ECO:0007669"/>
    <property type="project" value="UniProtKB-KW"/>
</dbReference>
<dbReference type="GO" id="GO:0008695">
    <property type="term" value="F:3-phenylpropionate dioxygenase activity"/>
    <property type="evidence" value="ECO:0007669"/>
    <property type="project" value="UniProtKB-UniRule"/>
</dbReference>
<dbReference type="GO" id="GO:0046872">
    <property type="term" value="F:metal ion binding"/>
    <property type="evidence" value="ECO:0007669"/>
    <property type="project" value="UniProtKB-KW"/>
</dbReference>
<dbReference type="GO" id="GO:0019380">
    <property type="term" value="P:3-phenylpropionate catabolic process"/>
    <property type="evidence" value="ECO:0007669"/>
    <property type="project" value="UniProtKB-UniRule"/>
</dbReference>
<dbReference type="CDD" id="cd03528">
    <property type="entry name" value="Rieske_RO_ferredoxin"/>
    <property type="match status" value="1"/>
</dbReference>
<dbReference type="FunFam" id="2.102.10.10:FF:000005">
    <property type="entry name" value="3-phenylpropionate/cinnamic acid dioxygenase ferredoxin subunit"/>
    <property type="match status" value="1"/>
</dbReference>
<dbReference type="Gene3D" id="2.102.10.10">
    <property type="entry name" value="Rieske [2Fe-2S] iron-sulphur domain"/>
    <property type="match status" value="1"/>
</dbReference>
<dbReference type="HAMAP" id="MF_01650">
    <property type="entry name" value="HcaC"/>
    <property type="match status" value="1"/>
</dbReference>
<dbReference type="InterPro" id="IPR023739">
    <property type="entry name" value="HcaC"/>
</dbReference>
<dbReference type="InterPro" id="IPR017941">
    <property type="entry name" value="Rieske_2Fe-2S"/>
</dbReference>
<dbReference type="InterPro" id="IPR036922">
    <property type="entry name" value="Rieske_2Fe-2S_sf"/>
</dbReference>
<dbReference type="InterPro" id="IPR053387">
    <property type="entry name" value="Ring-hydroxylating_fd"/>
</dbReference>
<dbReference type="NCBIfam" id="NF042948">
    <property type="entry name" value="3PPDioc_HcaC"/>
    <property type="match status" value="1"/>
</dbReference>
<dbReference type="NCBIfam" id="NF007422">
    <property type="entry name" value="PRK09965.1"/>
    <property type="match status" value="1"/>
</dbReference>
<dbReference type="PANTHER" id="PTHR21496:SF23">
    <property type="entry name" value="3-PHENYLPROPIONATE_CINNAMIC ACID DIOXYGENASE FERREDOXIN SUBUNIT"/>
    <property type="match status" value="1"/>
</dbReference>
<dbReference type="PANTHER" id="PTHR21496">
    <property type="entry name" value="FERREDOXIN-RELATED"/>
    <property type="match status" value="1"/>
</dbReference>
<dbReference type="Pfam" id="PF00355">
    <property type="entry name" value="Rieske"/>
    <property type="match status" value="1"/>
</dbReference>
<dbReference type="SUPFAM" id="SSF50022">
    <property type="entry name" value="ISP domain"/>
    <property type="match status" value="1"/>
</dbReference>
<dbReference type="PROSITE" id="PS51296">
    <property type="entry name" value="RIESKE"/>
    <property type="match status" value="1"/>
</dbReference>
<accession>Q31XV0</accession>
<feature type="chain" id="PRO_0000333721" description="3-phenylpropionate/cinnamic acid dioxygenase ferredoxin subunit">
    <location>
        <begin position="1"/>
        <end position="106"/>
    </location>
</feature>
<feature type="domain" description="Rieske" evidence="1">
    <location>
        <begin position="4"/>
        <end position="99"/>
    </location>
</feature>
<feature type="binding site" evidence="1">
    <location>
        <position position="42"/>
    </location>
    <ligand>
        <name>[2Fe-2S] cluster</name>
        <dbReference type="ChEBI" id="CHEBI:190135"/>
    </ligand>
</feature>
<feature type="binding site" evidence="1">
    <location>
        <position position="44"/>
    </location>
    <ligand>
        <name>[2Fe-2S] cluster</name>
        <dbReference type="ChEBI" id="CHEBI:190135"/>
    </ligand>
</feature>
<feature type="binding site" evidence="1">
    <location>
        <position position="62"/>
    </location>
    <ligand>
        <name>[2Fe-2S] cluster</name>
        <dbReference type="ChEBI" id="CHEBI:190135"/>
    </ligand>
</feature>
<feature type="binding site" evidence="1">
    <location>
        <position position="65"/>
    </location>
    <ligand>
        <name>[2Fe-2S] cluster</name>
        <dbReference type="ChEBI" id="CHEBI:190135"/>
    </ligand>
</feature>
<name>HCAC_SHIBS</name>
<evidence type="ECO:0000255" key="1">
    <source>
        <dbReference type="HAMAP-Rule" id="MF_01650"/>
    </source>
</evidence>
<protein>
    <recommendedName>
        <fullName evidence="1">3-phenylpropionate/cinnamic acid dioxygenase ferredoxin subunit</fullName>
    </recommendedName>
</protein>
<proteinExistence type="inferred from homology"/>
<organism>
    <name type="scientific">Shigella boydii serotype 4 (strain Sb227)</name>
    <dbReference type="NCBI Taxonomy" id="300268"/>
    <lineage>
        <taxon>Bacteria</taxon>
        <taxon>Pseudomonadati</taxon>
        <taxon>Pseudomonadota</taxon>
        <taxon>Gammaproteobacteria</taxon>
        <taxon>Enterobacterales</taxon>
        <taxon>Enterobacteriaceae</taxon>
        <taxon>Shigella</taxon>
    </lineage>
</organism>
<gene>
    <name evidence="1" type="primary">hcaC</name>
    <name type="ordered locus">SBO_2564</name>
</gene>